<organism>
    <name type="scientific">Eucalyptus globulus subsp. globulus</name>
    <name type="common">Tasmanian blue gum</name>
    <dbReference type="NCBI Taxonomy" id="71271"/>
    <lineage>
        <taxon>Eukaryota</taxon>
        <taxon>Viridiplantae</taxon>
        <taxon>Streptophyta</taxon>
        <taxon>Embryophyta</taxon>
        <taxon>Tracheophyta</taxon>
        <taxon>Spermatophyta</taxon>
        <taxon>Magnoliopsida</taxon>
        <taxon>eudicotyledons</taxon>
        <taxon>Gunneridae</taxon>
        <taxon>Pentapetalae</taxon>
        <taxon>rosids</taxon>
        <taxon>malvids</taxon>
        <taxon>Myrtales</taxon>
        <taxon>Myrtaceae</taxon>
        <taxon>Myrtoideae</taxon>
        <taxon>Eucalypteae</taxon>
        <taxon>Eucalyptus</taxon>
    </lineage>
</organism>
<geneLocation type="chloroplast"/>
<sequence length="319" mass="36514">MIFSTLEHILTHISFSIISIVITIFLISLSVDEIVGLYDSSEKGMTATFFCITGLLVTRWIYSGHFPLSDLYESLIFLSWSFSVIHMVPYFKKHKNYLSTITAPSTIFTQGFATSGLLTEMHQSEIVVPALQSQWLMMHVSMMILGYAALLCGSLLSVALLVITLRKAIRVFSKKNNFLNESFSFVEIQYMNERSNVLLTTSFCSSRNYYRAQLIQQLDQWSYRIISLGFLFLTIGILSGAVWANEAWGSYWNWDPKETWAFITWTLFAIYLHTRTNKNWESFNCAIVASIGFLIIWICYFGVNLLGIGLHSYGSFNLH</sequence>
<accession>Q49KU9</accession>
<evidence type="ECO:0000255" key="1">
    <source>
        <dbReference type="HAMAP-Rule" id="MF_01391"/>
    </source>
</evidence>
<name>CCSA_EUCGG</name>
<protein>
    <recommendedName>
        <fullName evidence="1">Cytochrome c biogenesis protein CcsA</fullName>
    </recommendedName>
</protein>
<reference key="1">
    <citation type="journal article" date="2005" name="DNA Res.">
        <title>Complete nucleotide sequence of the chloroplast genome from the Tasmanian blue gum, Eucalyptus globulus (Myrtaceae).</title>
        <authorList>
            <person name="Steane D.A."/>
        </authorList>
    </citation>
    <scope>NUCLEOTIDE SEQUENCE [LARGE SCALE GENOMIC DNA]</scope>
</reference>
<keyword id="KW-0150">Chloroplast</keyword>
<keyword id="KW-0201">Cytochrome c-type biogenesis</keyword>
<keyword id="KW-0472">Membrane</keyword>
<keyword id="KW-0934">Plastid</keyword>
<keyword id="KW-0793">Thylakoid</keyword>
<keyword id="KW-0812">Transmembrane</keyword>
<keyword id="KW-1133">Transmembrane helix</keyword>
<comment type="function">
    <text evidence="1">Required during biogenesis of c-type cytochromes (cytochrome c6 and cytochrome f) at the step of heme attachment.</text>
</comment>
<comment type="subunit">
    <text evidence="1">May interact with Ccs1.</text>
</comment>
<comment type="subcellular location">
    <subcellularLocation>
        <location evidence="1">Plastid</location>
        <location evidence="1">Chloroplast thylakoid membrane</location>
        <topology evidence="1">Multi-pass membrane protein</topology>
    </subcellularLocation>
</comment>
<comment type="similarity">
    <text evidence="1">Belongs to the CcmF/CycK/Ccl1/NrfE/CcsA family.</text>
</comment>
<gene>
    <name evidence="1" type="primary">ccsA</name>
</gene>
<proteinExistence type="inferred from homology"/>
<feature type="chain" id="PRO_0000353752" description="Cytochrome c biogenesis protein CcsA">
    <location>
        <begin position="1"/>
        <end position="319"/>
    </location>
</feature>
<feature type="transmembrane region" description="Helical" evidence="1">
    <location>
        <begin position="9"/>
        <end position="29"/>
    </location>
</feature>
<feature type="transmembrane region" description="Helical" evidence="1">
    <location>
        <begin position="48"/>
        <end position="68"/>
    </location>
</feature>
<feature type="transmembrane region" description="Helical" evidence="1">
    <location>
        <begin position="71"/>
        <end position="91"/>
    </location>
</feature>
<feature type="transmembrane region" description="Helical" evidence="1">
    <location>
        <begin position="98"/>
        <end position="118"/>
    </location>
</feature>
<feature type="transmembrane region" description="Helical" evidence="1">
    <location>
        <begin position="143"/>
        <end position="163"/>
    </location>
</feature>
<feature type="transmembrane region" description="Helical" evidence="1">
    <location>
        <begin position="225"/>
        <end position="245"/>
    </location>
</feature>
<feature type="transmembrane region" description="Helical" evidence="1">
    <location>
        <begin position="258"/>
        <end position="275"/>
    </location>
</feature>
<feature type="transmembrane region" description="Helical" evidence="1">
    <location>
        <begin position="286"/>
        <end position="306"/>
    </location>
</feature>
<dbReference type="EMBL" id="AY780259">
    <property type="protein sequence ID" value="AAX21077.1"/>
    <property type="molecule type" value="Genomic_DNA"/>
</dbReference>
<dbReference type="RefSeq" id="YP_636348.1">
    <property type="nucleotide sequence ID" value="NC_008115.1"/>
</dbReference>
<dbReference type="SMR" id="Q49KU9"/>
<dbReference type="GeneID" id="4108380"/>
<dbReference type="GO" id="GO:0009535">
    <property type="term" value="C:chloroplast thylakoid membrane"/>
    <property type="evidence" value="ECO:0007669"/>
    <property type="project" value="UniProtKB-SubCell"/>
</dbReference>
<dbReference type="GO" id="GO:0005886">
    <property type="term" value="C:plasma membrane"/>
    <property type="evidence" value="ECO:0007669"/>
    <property type="project" value="TreeGrafter"/>
</dbReference>
<dbReference type="GO" id="GO:0020037">
    <property type="term" value="F:heme binding"/>
    <property type="evidence" value="ECO:0007669"/>
    <property type="project" value="InterPro"/>
</dbReference>
<dbReference type="GO" id="GO:0017004">
    <property type="term" value="P:cytochrome complex assembly"/>
    <property type="evidence" value="ECO:0007669"/>
    <property type="project" value="UniProtKB-UniRule"/>
</dbReference>
<dbReference type="HAMAP" id="MF_01391">
    <property type="entry name" value="CytC_CcsA"/>
    <property type="match status" value="1"/>
</dbReference>
<dbReference type="InterPro" id="IPR002541">
    <property type="entry name" value="Cyt_c_assembly"/>
</dbReference>
<dbReference type="InterPro" id="IPR017562">
    <property type="entry name" value="Cyt_c_biogenesis_CcsA"/>
</dbReference>
<dbReference type="InterPro" id="IPR045062">
    <property type="entry name" value="Cyt_c_biogenesis_CcsA/CcmC"/>
</dbReference>
<dbReference type="NCBIfam" id="TIGR03144">
    <property type="entry name" value="cytochr_II_ccsB"/>
    <property type="match status" value="1"/>
</dbReference>
<dbReference type="PANTHER" id="PTHR30071:SF1">
    <property type="entry name" value="CYTOCHROME B_B6 PROTEIN-RELATED"/>
    <property type="match status" value="1"/>
</dbReference>
<dbReference type="PANTHER" id="PTHR30071">
    <property type="entry name" value="HEME EXPORTER PROTEIN C"/>
    <property type="match status" value="1"/>
</dbReference>
<dbReference type="Pfam" id="PF01578">
    <property type="entry name" value="Cytochrom_C_asm"/>
    <property type="match status" value="1"/>
</dbReference>